<sequence length="529" mass="60605">MASSRLWFSLLLAAALAGRATALWPWPQNIQTSDQRYVLYPNNFQFQYDVSSAAQPGCSVLDEAFQRYRDLLFGSGSWPRPYLTGKRHTLEKNVLVVSVVTPGCNQLPTLESVENYTLTINDDQCLLLSETVWGALRGLETFSQLVWKSAEGTFFINKTEIEDFPRFPHRGLLLDTSRHYLPLSSILDTLDVMAYNKLNVFHWHLVDDPSFPYESFTFPELMRKGSYNPVTHIYTAQDVKEVIEYARLRGIRVLAEFDTPGHTLSWGPGIPGLLTPCYSGSEPSGTFGPVNPSLNNTYEFMSTFFLEVSSVFPDFYLHLGGDEVDFTCWKSNPDIQDFMRKKGFGEDFKQLESFYIQTLLDIVSSYGKGYVVWQEVFDNKVKIRPDTIIQVWREDIPVNYMKELELVTKAGFRALLSAPWYLNRISYGPDWKDFYVVEPLAFEGTPEQKALVIGGEACMWGEYVDNTNLVPRLWPRAGAVAERLWSNKLTSDLTFAYERLSHFRCELLRRGVQAQPLNVGFCEQEFEQT</sequence>
<accession>Q5RC84</accession>
<dbReference type="EC" id="3.2.1.52" evidence="2"/>
<dbReference type="EMBL" id="CR858396">
    <property type="protein sequence ID" value="CAH90623.1"/>
    <property type="molecule type" value="Transcribed_RNA"/>
</dbReference>
<dbReference type="RefSeq" id="NP_001192280.1">
    <property type="nucleotide sequence ID" value="NM_001205351.1"/>
</dbReference>
<dbReference type="SMR" id="Q5RC84"/>
<dbReference type="FunCoup" id="Q5RC84">
    <property type="interactions" value="1347"/>
</dbReference>
<dbReference type="STRING" id="9601.ENSPPYP00000007503"/>
<dbReference type="CAZy" id="GH20">
    <property type="family name" value="Glycoside Hydrolase Family 20"/>
</dbReference>
<dbReference type="GlyCosmos" id="Q5RC84">
    <property type="glycosylation" value="3 sites, No reported glycans"/>
</dbReference>
<dbReference type="GeneID" id="100438794"/>
<dbReference type="KEGG" id="pon:100438794"/>
<dbReference type="CTD" id="3073"/>
<dbReference type="eggNOG" id="KOG2499">
    <property type="taxonomic scope" value="Eukaryota"/>
</dbReference>
<dbReference type="HOGENOM" id="CLU_007082_0_3_1"/>
<dbReference type="InParanoid" id="Q5RC84"/>
<dbReference type="OrthoDB" id="428480at2759"/>
<dbReference type="TreeFam" id="TF313036"/>
<dbReference type="Proteomes" id="UP000001595">
    <property type="component" value="Chromosome 15"/>
</dbReference>
<dbReference type="GO" id="GO:0005764">
    <property type="term" value="C:lysosome"/>
    <property type="evidence" value="ECO:0007669"/>
    <property type="project" value="UniProtKB-SubCell"/>
</dbReference>
<dbReference type="GO" id="GO:0016020">
    <property type="term" value="C:membrane"/>
    <property type="evidence" value="ECO:0007669"/>
    <property type="project" value="TreeGrafter"/>
</dbReference>
<dbReference type="GO" id="GO:0004563">
    <property type="term" value="F:beta-N-acetylhexosaminidase activity"/>
    <property type="evidence" value="ECO:0000250"/>
    <property type="project" value="UniProtKB"/>
</dbReference>
<dbReference type="GO" id="GO:0005975">
    <property type="term" value="P:carbohydrate metabolic process"/>
    <property type="evidence" value="ECO:0007669"/>
    <property type="project" value="InterPro"/>
</dbReference>
<dbReference type="GO" id="GO:0006689">
    <property type="term" value="P:ganglioside catabolic process"/>
    <property type="evidence" value="ECO:0000250"/>
    <property type="project" value="UniProtKB"/>
</dbReference>
<dbReference type="GO" id="GO:0030203">
    <property type="term" value="P:glycosaminoglycan metabolic process"/>
    <property type="evidence" value="ECO:0007669"/>
    <property type="project" value="TreeGrafter"/>
</dbReference>
<dbReference type="CDD" id="cd06562">
    <property type="entry name" value="GH20_HexA_HexB-like"/>
    <property type="match status" value="1"/>
</dbReference>
<dbReference type="FunFam" id="3.20.20.80:FF:000049">
    <property type="entry name" value="Beta-hexosaminidase A"/>
    <property type="match status" value="1"/>
</dbReference>
<dbReference type="FunFam" id="3.30.379.10:FF:000001">
    <property type="entry name" value="Beta-hexosaminidase subunit beta"/>
    <property type="match status" value="1"/>
</dbReference>
<dbReference type="Gene3D" id="3.30.379.10">
    <property type="entry name" value="Chitobiase/beta-hexosaminidase domain 2-like"/>
    <property type="match status" value="1"/>
</dbReference>
<dbReference type="Gene3D" id="3.20.20.80">
    <property type="entry name" value="Glycosidases"/>
    <property type="match status" value="1"/>
</dbReference>
<dbReference type="InterPro" id="IPR025705">
    <property type="entry name" value="Beta_hexosaminidase_sua/sub"/>
</dbReference>
<dbReference type="InterPro" id="IPR015883">
    <property type="entry name" value="Glyco_hydro_20_cat"/>
</dbReference>
<dbReference type="InterPro" id="IPR017853">
    <property type="entry name" value="Glycoside_hydrolase_SF"/>
</dbReference>
<dbReference type="InterPro" id="IPR029018">
    <property type="entry name" value="Hex-like_dom2"/>
</dbReference>
<dbReference type="InterPro" id="IPR029019">
    <property type="entry name" value="HEX_eukaryotic_N"/>
</dbReference>
<dbReference type="PANTHER" id="PTHR22600">
    <property type="entry name" value="BETA-HEXOSAMINIDASE"/>
    <property type="match status" value="1"/>
</dbReference>
<dbReference type="PANTHER" id="PTHR22600:SF39">
    <property type="entry name" value="BETA-HEXOSAMINIDASE SUBUNIT ALPHA"/>
    <property type="match status" value="1"/>
</dbReference>
<dbReference type="Pfam" id="PF00728">
    <property type="entry name" value="Glyco_hydro_20"/>
    <property type="match status" value="1"/>
</dbReference>
<dbReference type="Pfam" id="PF14845">
    <property type="entry name" value="Glycohydro_20b2"/>
    <property type="match status" value="1"/>
</dbReference>
<dbReference type="PIRSF" id="PIRSF001093">
    <property type="entry name" value="B-hxosamndse_ab_euk"/>
    <property type="match status" value="1"/>
</dbReference>
<dbReference type="PRINTS" id="PR00738">
    <property type="entry name" value="GLHYDRLASE20"/>
</dbReference>
<dbReference type="SUPFAM" id="SSF51445">
    <property type="entry name" value="(Trans)glycosidases"/>
    <property type="match status" value="1"/>
</dbReference>
<dbReference type="SUPFAM" id="SSF55545">
    <property type="entry name" value="beta-N-acetylhexosaminidase-like domain"/>
    <property type="match status" value="1"/>
</dbReference>
<proteinExistence type="inferred from homology"/>
<comment type="function">
    <text evidence="2">Hydrolyzes the non-reducing end N-acetyl-D-hexosamine and/or sulfated N-acetyl-D-hexosamine of glycoconjugates, such as the oligosaccharide moieties from proteins and neutral glycolipids, or from certain mucopolysaccharides. The isozyme S is as active as the isozyme A on the anionic bis-sulfated glycans, the chondroitin-6-sulfate trisaccharide (C6S-3), and the dermatan sulfate pentasaccharide, and the sulfated glycosphingolipid SM2. The isozyme B does not hydrolyze each of these substrates, however hydrolyzes efficiently neutral oligosaccharide. Only the isozyme A is responsible for the degradation of GM2 gangliosides in the presence of GM2A.</text>
</comment>
<comment type="catalytic activity">
    <reaction evidence="2">
        <text>Hydrolysis of terminal non-reducing N-acetyl-D-hexosamine residues in N-acetyl-beta-D-hexosaminides.</text>
        <dbReference type="EC" id="3.2.1.52"/>
    </reaction>
</comment>
<comment type="catalytic activity">
    <reaction evidence="2">
        <text>N-acetyl-beta-D-galactosaminyl-(1-&gt;4)-beta-D-3-sulfogalactosyl-(1-&gt;4)-beta-D-glucosyl-(1&lt;-&gt;1')-ceramide + H2O = a beta-D-3-sulfogalactosyl-(1-&gt;4)-beta-D-glucosyl-(1&lt;-&gt;1')-ceramide + N-acetyl-beta-D-galactosamine</text>
        <dbReference type="Rhea" id="RHEA:48276"/>
        <dbReference type="ChEBI" id="CHEBI:15377"/>
        <dbReference type="ChEBI" id="CHEBI:28497"/>
        <dbReference type="ChEBI" id="CHEBI:90163"/>
        <dbReference type="ChEBI" id="CHEBI:90164"/>
    </reaction>
    <physiologicalReaction direction="left-to-right" evidence="2">
        <dbReference type="Rhea" id="RHEA:48277"/>
    </physiologicalReaction>
</comment>
<comment type="catalytic activity">
    <reaction evidence="2">
        <text>a ganglioside GM2 (d18:1(4E)) + H2O = a ganglioside GM3 (d18:1(4E)) + N-acetyl-beta-D-galactosamine</text>
        <dbReference type="Rhea" id="RHEA:47940"/>
        <dbReference type="ChEBI" id="CHEBI:15377"/>
        <dbReference type="ChEBI" id="CHEBI:28497"/>
        <dbReference type="ChEBI" id="CHEBI:60065"/>
        <dbReference type="ChEBI" id="CHEBI:71502"/>
    </reaction>
    <physiologicalReaction direction="left-to-right" evidence="2">
        <dbReference type="Rhea" id="RHEA:47941"/>
    </physiologicalReaction>
</comment>
<comment type="catalytic activity">
    <reaction evidence="2">
        <text>a ganglioside GM2 + H2O = a ganglioside GM3 + N-acetyl-beta-D-galactosamine</text>
        <dbReference type="Rhea" id="RHEA:47968"/>
        <dbReference type="ChEBI" id="CHEBI:15377"/>
        <dbReference type="ChEBI" id="CHEBI:28497"/>
        <dbReference type="ChEBI" id="CHEBI:79210"/>
        <dbReference type="ChEBI" id="CHEBI:79218"/>
    </reaction>
    <physiologicalReaction direction="left-to-right" evidence="2">
        <dbReference type="Rhea" id="RHEA:47969"/>
    </physiologicalReaction>
</comment>
<comment type="catalytic activity">
    <reaction evidence="2">
        <text>beta-D-GalNAc-(1-&gt;4)-alpha-L-IdoA-(1-&gt;3)-beta-D-GalNAc-4-sulfate-(1-&gt;4)-alpha-L-IdoA-(1-&gt;3)-D-GalNAc-4-sulfate + H2O = alpha-L-IdoA-(1-&gt;3)-beta-D-GalNAc-4-sulfate-(1-&gt;4)-alpha-L-IdoA-(1-&gt;3)-D-GalNAc-4-sulfate + N-acetyl-D-galactosamine</text>
        <dbReference type="Rhea" id="RHEA:64372"/>
        <dbReference type="ChEBI" id="CHEBI:15377"/>
        <dbReference type="ChEBI" id="CHEBI:28037"/>
        <dbReference type="ChEBI" id="CHEBI:152565"/>
        <dbReference type="ChEBI" id="CHEBI:152566"/>
    </reaction>
    <physiologicalReaction direction="left-to-right" evidence="2">
        <dbReference type="Rhea" id="RHEA:64373"/>
    </physiologicalReaction>
</comment>
<comment type="catalytic activity">
    <reaction evidence="2">
        <text>N-acetyl-beta-D-6-sulfogalactosaminyl-(1-&gt;4)-alpha-L-iduronyl-(1-&gt;3)-N-acetyl-D-6-sulfogalactosamine + H2O = alpha-L-iduronyl-(1-&gt;3)-N-acetyl-D-6-sulfogalactosamine + N-acetyl-D-6-sulfogalactosamine</text>
        <dbReference type="Rhea" id="RHEA:64384"/>
        <dbReference type="ChEBI" id="CHEBI:15377"/>
        <dbReference type="ChEBI" id="CHEBI:152567"/>
        <dbReference type="ChEBI" id="CHEBI:152568"/>
        <dbReference type="ChEBI" id="CHEBI:153064"/>
    </reaction>
    <physiologicalReaction direction="left-to-right" evidence="2">
        <dbReference type="Rhea" id="RHEA:64385"/>
    </physiologicalReaction>
</comment>
<comment type="activity regulation">
    <text evidence="2">Addition of GM2A stimulates the hydrolysis of sulfated glycosphingolipid SM2 and the ganglioside GM2.</text>
</comment>
<comment type="subunit">
    <text evidence="2">There are 3 beta-hexosaminidase isozymes: isozyme A (hexosaminidase A) is a heterodimer composed of one subunit alpha and one subunit beta (chain A and B); isozyme B (hexosaminidase B) is a homodimer of two beta subunits (two chains A and B); isozyme S (hexosaminidase S) is a homodimer of two alpha subunits. The composition of the dimer (isozyme A versus isozyme S) has a significant effect on the substrate specificity of the alpha subunit active site.</text>
</comment>
<comment type="subcellular location">
    <subcellularLocation>
        <location evidence="1">Lysosome</location>
    </subcellularLocation>
</comment>
<comment type="similarity">
    <text evidence="4">Belongs to the glycosyl hydrolase 20 family.</text>
</comment>
<feature type="signal peptide" evidence="3">
    <location>
        <begin position="1"/>
        <end position="22"/>
    </location>
</feature>
<feature type="propeptide" id="PRO_0000011997" evidence="1">
    <location>
        <begin position="23"/>
        <end position="88"/>
    </location>
</feature>
<feature type="chain" id="PRO_0000011998" description="Beta-hexosaminidase subunit alpha">
    <location>
        <begin position="89"/>
        <end position="529"/>
    </location>
</feature>
<feature type="region of interest" description="Critical for hydrolysis GM2 gangliosides" evidence="1">
    <location>
        <begin position="423"/>
        <end position="424"/>
    </location>
</feature>
<feature type="active site" description="Proton donor" evidence="1">
    <location>
        <position position="323"/>
    </location>
</feature>
<feature type="glycosylation site" description="N-linked (GlcNAc...) asparagine" evidence="3">
    <location>
        <position position="115"/>
    </location>
</feature>
<feature type="glycosylation site" description="N-linked (GlcNAc...) asparagine" evidence="3">
    <location>
        <position position="157"/>
    </location>
</feature>
<feature type="glycosylation site" description="N-linked (GlcNAc...) asparagine" evidence="3">
    <location>
        <position position="295"/>
    </location>
</feature>
<feature type="disulfide bond" evidence="1">
    <location>
        <begin position="58"/>
        <end position="104"/>
    </location>
</feature>
<feature type="disulfide bond" evidence="1">
    <location>
        <begin position="277"/>
        <end position="328"/>
    </location>
</feature>
<feature type="disulfide bond" evidence="1">
    <location>
        <begin position="505"/>
        <end position="522"/>
    </location>
</feature>
<keyword id="KW-1015">Disulfide bond</keyword>
<keyword id="KW-0325">Glycoprotein</keyword>
<keyword id="KW-0326">Glycosidase</keyword>
<keyword id="KW-0378">Hydrolase</keyword>
<keyword id="KW-0443">Lipid metabolism</keyword>
<keyword id="KW-0458">Lysosome</keyword>
<keyword id="KW-1185">Reference proteome</keyword>
<keyword id="KW-0732">Signal</keyword>
<keyword id="KW-0865">Zymogen</keyword>
<evidence type="ECO:0000250" key="1"/>
<evidence type="ECO:0000250" key="2">
    <source>
        <dbReference type="UniProtKB" id="P06865"/>
    </source>
</evidence>
<evidence type="ECO:0000255" key="3"/>
<evidence type="ECO:0000305" key="4"/>
<name>HEXA_PONAB</name>
<reference key="1">
    <citation type="submission" date="2004-11" db="EMBL/GenBank/DDBJ databases">
        <authorList>
            <consortium name="The German cDNA consortium"/>
        </authorList>
    </citation>
    <scope>NUCLEOTIDE SEQUENCE [LARGE SCALE MRNA]</scope>
    <source>
        <tissue>Brain cortex</tissue>
    </source>
</reference>
<protein>
    <recommendedName>
        <fullName evidence="2">Beta-hexosaminidase subunit alpha</fullName>
        <ecNumber evidence="2">3.2.1.52</ecNumber>
    </recommendedName>
    <alternativeName>
        <fullName>Beta-N-acetylhexosaminidase subunit alpha</fullName>
        <shortName>Hexosaminidase subunit A</shortName>
    </alternativeName>
    <alternativeName>
        <fullName>N-acetyl-beta-glucosaminidase subunit alpha</fullName>
    </alternativeName>
</protein>
<organism>
    <name type="scientific">Pongo abelii</name>
    <name type="common">Sumatran orangutan</name>
    <name type="synonym">Pongo pygmaeus abelii</name>
    <dbReference type="NCBI Taxonomy" id="9601"/>
    <lineage>
        <taxon>Eukaryota</taxon>
        <taxon>Metazoa</taxon>
        <taxon>Chordata</taxon>
        <taxon>Craniata</taxon>
        <taxon>Vertebrata</taxon>
        <taxon>Euteleostomi</taxon>
        <taxon>Mammalia</taxon>
        <taxon>Eutheria</taxon>
        <taxon>Euarchontoglires</taxon>
        <taxon>Primates</taxon>
        <taxon>Haplorrhini</taxon>
        <taxon>Catarrhini</taxon>
        <taxon>Hominidae</taxon>
        <taxon>Pongo</taxon>
    </lineage>
</organism>
<gene>
    <name evidence="2" type="primary">HEXA</name>
</gene>